<keyword id="KW-0067">ATP-binding</keyword>
<keyword id="KW-0963">Cytoplasm</keyword>
<keyword id="KW-0436">Ligase</keyword>
<keyword id="KW-0547">Nucleotide-binding</keyword>
<keyword id="KW-0819">tRNA processing</keyword>
<gene>
    <name evidence="1" type="primary">tilS</name>
    <name type="ordered locus">SCH_0236</name>
</gene>
<dbReference type="EC" id="6.3.4.19" evidence="1"/>
<dbReference type="EMBL" id="AE017220">
    <property type="protein sequence ID" value="AAX64142.1"/>
    <property type="molecule type" value="Genomic_DNA"/>
</dbReference>
<dbReference type="RefSeq" id="WP_001539059.1">
    <property type="nucleotide sequence ID" value="NC_006905.1"/>
</dbReference>
<dbReference type="SMR" id="Q57T19"/>
<dbReference type="KEGG" id="sec:SCH_0236"/>
<dbReference type="HOGENOM" id="CLU_018869_2_0_6"/>
<dbReference type="Proteomes" id="UP000000538">
    <property type="component" value="Chromosome"/>
</dbReference>
<dbReference type="GO" id="GO:0005737">
    <property type="term" value="C:cytoplasm"/>
    <property type="evidence" value="ECO:0007669"/>
    <property type="project" value="UniProtKB-SubCell"/>
</dbReference>
<dbReference type="GO" id="GO:0005524">
    <property type="term" value="F:ATP binding"/>
    <property type="evidence" value="ECO:0007669"/>
    <property type="project" value="UniProtKB-UniRule"/>
</dbReference>
<dbReference type="GO" id="GO:0032267">
    <property type="term" value="F:tRNA(Ile)-lysidine synthase activity"/>
    <property type="evidence" value="ECO:0007669"/>
    <property type="project" value="UniProtKB-EC"/>
</dbReference>
<dbReference type="GO" id="GO:0006400">
    <property type="term" value="P:tRNA modification"/>
    <property type="evidence" value="ECO:0007669"/>
    <property type="project" value="UniProtKB-UniRule"/>
</dbReference>
<dbReference type="CDD" id="cd01992">
    <property type="entry name" value="TilS_N"/>
    <property type="match status" value="1"/>
</dbReference>
<dbReference type="FunFam" id="3.40.50.620:FF:000173">
    <property type="entry name" value="tRNA(Ile)-lysidine synthase"/>
    <property type="match status" value="1"/>
</dbReference>
<dbReference type="Gene3D" id="1.20.59.20">
    <property type="match status" value="1"/>
</dbReference>
<dbReference type="Gene3D" id="3.40.50.620">
    <property type="entry name" value="HUPs"/>
    <property type="match status" value="1"/>
</dbReference>
<dbReference type="HAMAP" id="MF_01161">
    <property type="entry name" value="tRNA_Ile_lys_synt"/>
    <property type="match status" value="1"/>
</dbReference>
<dbReference type="InterPro" id="IPR012796">
    <property type="entry name" value="Lysidine-tRNA-synth_C"/>
</dbReference>
<dbReference type="InterPro" id="IPR014729">
    <property type="entry name" value="Rossmann-like_a/b/a_fold"/>
</dbReference>
<dbReference type="InterPro" id="IPR011063">
    <property type="entry name" value="TilS/TtcA_N"/>
</dbReference>
<dbReference type="InterPro" id="IPR012094">
    <property type="entry name" value="tRNA_Ile_lys_synt"/>
</dbReference>
<dbReference type="InterPro" id="IPR012795">
    <property type="entry name" value="tRNA_Ile_lys_synt_N"/>
</dbReference>
<dbReference type="InterPro" id="IPR015262">
    <property type="entry name" value="tRNA_Ile_lys_synt_subst-bd"/>
</dbReference>
<dbReference type="NCBIfam" id="TIGR02433">
    <property type="entry name" value="lysidine_TilS_C"/>
    <property type="match status" value="1"/>
</dbReference>
<dbReference type="NCBIfam" id="TIGR02432">
    <property type="entry name" value="lysidine_TilS_N"/>
    <property type="match status" value="1"/>
</dbReference>
<dbReference type="NCBIfam" id="NF007942">
    <property type="entry name" value="PRK10660.1"/>
    <property type="match status" value="1"/>
</dbReference>
<dbReference type="PANTHER" id="PTHR43033">
    <property type="entry name" value="TRNA(ILE)-LYSIDINE SYNTHASE-RELATED"/>
    <property type="match status" value="1"/>
</dbReference>
<dbReference type="PANTHER" id="PTHR43033:SF1">
    <property type="entry name" value="TRNA(ILE)-LYSIDINE SYNTHASE-RELATED"/>
    <property type="match status" value="1"/>
</dbReference>
<dbReference type="Pfam" id="PF01171">
    <property type="entry name" value="ATP_bind_3"/>
    <property type="match status" value="1"/>
</dbReference>
<dbReference type="Pfam" id="PF09179">
    <property type="entry name" value="TilS"/>
    <property type="match status" value="1"/>
</dbReference>
<dbReference type="Pfam" id="PF11734">
    <property type="entry name" value="TilS_C"/>
    <property type="match status" value="1"/>
</dbReference>
<dbReference type="SMART" id="SM00977">
    <property type="entry name" value="TilS_C"/>
    <property type="match status" value="1"/>
</dbReference>
<dbReference type="SUPFAM" id="SSF52402">
    <property type="entry name" value="Adenine nucleotide alpha hydrolases-like"/>
    <property type="match status" value="1"/>
</dbReference>
<dbReference type="SUPFAM" id="SSF82829">
    <property type="entry name" value="MesJ substrate recognition domain-like"/>
    <property type="match status" value="1"/>
</dbReference>
<dbReference type="SUPFAM" id="SSF56037">
    <property type="entry name" value="PheT/TilS domain"/>
    <property type="match status" value="1"/>
</dbReference>
<sequence length="430" mass="48348">MTTLTLNTSLLSSRRILAAFSGGLDSTVLLHQLVLWRERHPDVTLRAIHIHHGLSPHADSWVRHCETVCERWQVPLVVERVTLADNGLGIEAHAREARYRAFAQTLLPGEVLATAQHLDDQCETFLLALKRGSGPAGLSAMGERSPFAGTLLLRPLLRETRKTLEQWAVRHGLCWIEDESNQDDAYDRNFLRLRALPLLQQRWPHFPAAVARSATLCAAQERLLDELLASDLTDCITTEGTLRLSPLMSMSDVRRAAILRRWLAMRNAPMPSRDALERIWQEVALARDDASPCLRFGDHEIRRYQSQLWWIKSVAGQHETTVAWPAWQTPLALPAGLGTVQLVPGGELRRPREEESVSIRFKAPGVLHIVGRNGGRKLKKIWQEQGIPPWRRDTTPLLFYGETLIAAAGVFVTREGAAEDKEGVSLVWHA</sequence>
<organism>
    <name type="scientific">Salmonella choleraesuis (strain SC-B67)</name>
    <dbReference type="NCBI Taxonomy" id="321314"/>
    <lineage>
        <taxon>Bacteria</taxon>
        <taxon>Pseudomonadati</taxon>
        <taxon>Pseudomonadota</taxon>
        <taxon>Gammaproteobacteria</taxon>
        <taxon>Enterobacterales</taxon>
        <taxon>Enterobacteriaceae</taxon>
        <taxon>Salmonella</taxon>
    </lineage>
</organism>
<proteinExistence type="inferred from homology"/>
<comment type="function">
    <text evidence="1">Ligates lysine onto the cytidine present at position 34 of the AUA codon-specific tRNA(Ile) that contains the anticodon CAU, in an ATP-dependent manner. Cytidine is converted to lysidine, thus changing the amino acid specificity of the tRNA from methionine to isoleucine.</text>
</comment>
<comment type="catalytic activity">
    <reaction evidence="1">
        <text>cytidine(34) in tRNA(Ile2) + L-lysine + ATP = lysidine(34) in tRNA(Ile2) + AMP + diphosphate + H(+)</text>
        <dbReference type="Rhea" id="RHEA:43744"/>
        <dbReference type="Rhea" id="RHEA-COMP:10625"/>
        <dbReference type="Rhea" id="RHEA-COMP:10670"/>
        <dbReference type="ChEBI" id="CHEBI:15378"/>
        <dbReference type="ChEBI" id="CHEBI:30616"/>
        <dbReference type="ChEBI" id="CHEBI:32551"/>
        <dbReference type="ChEBI" id="CHEBI:33019"/>
        <dbReference type="ChEBI" id="CHEBI:82748"/>
        <dbReference type="ChEBI" id="CHEBI:83665"/>
        <dbReference type="ChEBI" id="CHEBI:456215"/>
        <dbReference type="EC" id="6.3.4.19"/>
    </reaction>
</comment>
<comment type="subcellular location">
    <subcellularLocation>
        <location evidence="1">Cytoplasm</location>
    </subcellularLocation>
</comment>
<comment type="domain">
    <text>The N-terminal region contains the highly conserved SGGXDS motif, predicted to be a P-loop motif involved in ATP binding.</text>
</comment>
<comment type="similarity">
    <text evidence="1">Belongs to the tRNA(Ile)-lysidine synthase family.</text>
</comment>
<evidence type="ECO:0000255" key="1">
    <source>
        <dbReference type="HAMAP-Rule" id="MF_01161"/>
    </source>
</evidence>
<accession>Q57T19</accession>
<reference key="1">
    <citation type="journal article" date="2005" name="Nucleic Acids Res.">
        <title>The genome sequence of Salmonella enterica serovar Choleraesuis, a highly invasive and resistant zoonotic pathogen.</title>
        <authorList>
            <person name="Chiu C.-H."/>
            <person name="Tang P."/>
            <person name="Chu C."/>
            <person name="Hu S."/>
            <person name="Bao Q."/>
            <person name="Yu J."/>
            <person name="Chou Y.-Y."/>
            <person name="Wang H.-S."/>
            <person name="Lee Y.-S."/>
        </authorList>
    </citation>
    <scope>NUCLEOTIDE SEQUENCE [LARGE SCALE GENOMIC DNA]</scope>
    <source>
        <strain>SC-B67</strain>
    </source>
</reference>
<name>TILS_SALCH</name>
<feature type="chain" id="PRO_1000164327" description="tRNA(Ile)-lysidine synthase">
    <location>
        <begin position="1"/>
        <end position="430"/>
    </location>
</feature>
<feature type="binding site" evidence="1">
    <location>
        <begin position="21"/>
        <end position="26"/>
    </location>
    <ligand>
        <name>ATP</name>
        <dbReference type="ChEBI" id="CHEBI:30616"/>
    </ligand>
</feature>
<protein>
    <recommendedName>
        <fullName evidence="1">tRNA(Ile)-lysidine synthase</fullName>
        <ecNumber evidence="1">6.3.4.19</ecNumber>
    </recommendedName>
    <alternativeName>
        <fullName evidence="1">tRNA(Ile)-2-lysyl-cytidine synthase</fullName>
    </alternativeName>
    <alternativeName>
        <fullName evidence="1">tRNA(Ile)-lysidine synthetase</fullName>
    </alternativeName>
</protein>